<evidence type="ECO:0000255" key="1">
    <source>
        <dbReference type="HAMAP-Rule" id="MF_01341"/>
    </source>
</evidence>
<evidence type="ECO:0000256" key="2">
    <source>
        <dbReference type="SAM" id="MobiDB-lite"/>
    </source>
</evidence>
<evidence type="ECO:0000305" key="3"/>
<organism>
    <name type="scientific">Salmonella enteritidis PT4 (strain P125109)</name>
    <dbReference type="NCBI Taxonomy" id="550537"/>
    <lineage>
        <taxon>Bacteria</taxon>
        <taxon>Pseudomonadati</taxon>
        <taxon>Pseudomonadota</taxon>
        <taxon>Gammaproteobacteria</taxon>
        <taxon>Enterobacterales</taxon>
        <taxon>Enterobacteriaceae</taxon>
        <taxon>Salmonella</taxon>
    </lineage>
</organism>
<feature type="chain" id="PRO_1000142874" description="Large ribosomal subunit protein uL15">
    <location>
        <begin position="1"/>
        <end position="144"/>
    </location>
</feature>
<feature type="region of interest" description="Disordered" evidence="2">
    <location>
        <begin position="1"/>
        <end position="54"/>
    </location>
</feature>
<feature type="compositionally biased region" description="Gly residues" evidence="2">
    <location>
        <begin position="21"/>
        <end position="31"/>
    </location>
</feature>
<dbReference type="EMBL" id="AM933172">
    <property type="protein sequence ID" value="CAR34824.1"/>
    <property type="molecule type" value="Genomic_DNA"/>
</dbReference>
<dbReference type="RefSeq" id="WP_001238917.1">
    <property type="nucleotide sequence ID" value="NC_011294.1"/>
</dbReference>
<dbReference type="SMR" id="B5R1F8"/>
<dbReference type="GeneID" id="93778686"/>
<dbReference type="KEGG" id="set:SEN3249"/>
<dbReference type="HOGENOM" id="CLU_055188_4_2_6"/>
<dbReference type="Proteomes" id="UP000000613">
    <property type="component" value="Chromosome"/>
</dbReference>
<dbReference type="GO" id="GO:0022625">
    <property type="term" value="C:cytosolic large ribosomal subunit"/>
    <property type="evidence" value="ECO:0007669"/>
    <property type="project" value="TreeGrafter"/>
</dbReference>
<dbReference type="GO" id="GO:0019843">
    <property type="term" value="F:rRNA binding"/>
    <property type="evidence" value="ECO:0007669"/>
    <property type="project" value="UniProtKB-UniRule"/>
</dbReference>
<dbReference type="GO" id="GO:0003735">
    <property type="term" value="F:structural constituent of ribosome"/>
    <property type="evidence" value="ECO:0007669"/>
    <property type="project" value="InterPro"/>
</dbReference>
<dbReference type="GO" id="GO:0006412">
    <property type="term" value="P:translation"/>
    <property type="evidence" value="ECO:0007669"/>
    <property type="project" value="UniProtKB-UniRule"/>
</dbReference>
<dbReference type="FunFam" id="3.100.10.10:FF:000003">
    <property type="entry name" value="50S ribosomal protein L15"/>
    <property type="match status" value="1"/>
</dbReference>
<dbReference type="Gene3D" id="3.100.10.10">
    <property type="match status" value="1"/>
</dbReference>
<dbReference type="HAMAP" id="MF_01341">
    <property type="entry name" value="Ribosomal_uL15"/>
    <property type="match status" value="1"/>
</dbReference>
<dbReference type="InterPro" id="IPR030878">
    <property type="entry name" value="Ribosomal_uL15"/>
</dbReference>
<dbReference type="InterPro" id="IPR021131">
    <property type="entry name" value="Ribosomal_uL15/eL18"/>
</dbReference>
<dbReference type="InterPro" id="IPR036227">
    <property type="entry name" value="Ribosomal_uL15/eL18_sf"/>
</dbReference>
<dbReference type="InterPro" id="IPR005749">
    <property type="entry name" value="Ribosomal_uL15_bac-type"/>
</dbReference>
<dbReference type="InterPro" id="IPR001196">
    <property type="entry name" value="Ribosomal_uL15_CS"/>
</dbReference>
<dbReference type="NCBIfam" id="TIGR01071">
    <property type="entry name" value="rplO_bact"/>
    <property type="match status" value="1"/>
</dbReference>
<dbReference type="PANTHER" id="PTHR12934">
    <property type="entry name" value="50S RIBOSOMAL PROTEIN L15"/>
    <property type="match status" value="1"/>
</dbReference>
<dbReference type="PANTHER" id="PTHR12934:SF11">
    <property type="entry name" value="LARGE RIBOSOMAL SUBUNIT PROTEIN UL15M"/>
    <property type="match status" value="1"/>
</dbReference>
<dbReference type="Pfam" id="PF00828">
    <property type="entry name" value="Ribosomal_L27A"/>
    <property type="match status" value="1"/>
</dbReference>
<dbReference type="SUPFAM" id="SSF52080">
    <property type="entry name" value="Ribosomal proteins L15p and L18e"/>
    <property type="match status" value="1"/>
</dbReference>
<dbReference type="PROSITE" id="PS00475">
    <property type="entry name" value="RIBOSOMAL_L15"/>
    <property type="match status" value="1"/>
</dbReference>
<sequence length="144" mass="14966">MRLNTLSPAEGSKKAGKRLGRGIGSGLGKTGGRGHKGQKSRSGGGVRRGFEGGQMPLYRRLPKFGFTSRKAAITAEVRLSDLAKVEGGVVDLNTLKAANIIGIQIEFAKVILAGEVTTPVTVRGLRVTKGARAAIEAAGGKIEE</sequence>
<protein>
    <recommendedName>
        <fullName evidence="1">Large ribosomal subunit protein uL15</fullName>
    </recommendedName>
    <alternativeName>
        <fullName evidence="3">50S ribosomal protein L15</fullName>
    </alternativeName>
</protein>
<proteinExistence type="inferred from homology"/>
<keyword id="KW-0687">Ribonucleoprotein</keyword>
<keyword id="KW-0689">Ribosomal protein</keyword>
<keyword id="KW-0694">RNA-binding</keyword>
<keyword id="KW-0699">rRNA-binding</keyword>
<reference key="1">
    <citation type="journal article" date="2008" name="Genome Res.">
        <title>Comparative genome analysis of Salmonella enteritidis PT4 and Salmonella gallinarum 287/91 provides insights into evolutionary and host adaptation pathways.</title>
        <authorList>
            <person name="Thomson N.R."/>
            <person name="Clayton D.J."/>
            <person name="Windhorst D."/>
            <person name="Vernikos G."/>
            <person name="Davidson S."/>
            <person name="Churcher C."/>
            <person name="Quail M.A."/>
            <person name="Stevens M."/>
            <person name="Jones M.A."/>
            <person name="Watson M."/>
            <person name="Barron A."/>
            <person name="Layton A."/>
            <person name="Pickard D."/>
            <person name="Kingsley R.A."/>
            <person name="Bignell A."/>
            <person name="Clark L."/>
            <person name="Harris B."/>
            <person name="Ormond D."/>
            <person name="Abdellah Z."/>
            <person name="Brooks K."/>
            <person name="Cherevach I."/>
            <person name="Chillingworth T."/>
            <person name="Woodward J."/>
            <person name="Norberczak H."/>
            <person name="Lord A."/>
            <person name="Arrowsmith C."/>
            <person name="Jagels K."/>
            <person name="Moule S."/>
            <person name="Mungall K."/>
            <person name="Saunders M."/>
            <person name="Whitehead S."/>
            <person name="Chabalgoity J.A."/>
            <person name="Maskell D."/>
            <person name="Humphreys T."/>
            <person name="Roberts M."/>
            <person name="Barrow P.A."/>
            <person name="Dougan G."/>
            <person name="Parkhill J."/>
        </authorList>
    </citation>
    <scope>NUCLEOTIDE SEQUENCE [LARGE SCALE GENOMIC DNA]</scope>
    <source>
        <strain>P125109</strain>
    </source>
</reference>
<name>RL15_SALEP</name>
<accession>B5R1F8</accession>
<gene>
    <name evidence="1" type="primary">rplO</name>
    <name type="ordered locus">SEN3249</name>
</gene>
<comment type="function">
    <text evidence="1">Binds to the 23S rRNA.</text>
</comment>
<comment type="subunit">
    <text evidence="1">Part of the 50S ribosomal subunit.</text>
</comment>
<comment type="similarity">
    <text evidence="1">Belongs to the universal ribosomal protein uL15 family.</text>
</comment>